<sequence>MEVEKELKTFSEVWISAIAAACYCRFVPAVAPHGGALRLLLLLPVVLLFIFLPLRLSSFHLGGPTALYLVWLANFKLLLFAFHLGPLSNPSLSLLHFISTTLLPIKFRDDPSNDHEKNKRTLSFEWRKVVLFVAKLVFFAGILKIYEFRKDLPHFVISVLYCFHFYLGTEITLAASAVIARATLGLDLYPQFNEPYLATSLQDFWGRRWNLMVSDILGLTTYQPVRRVLSRWVRLRWEVAGAMLVAFTVSGLMHEVFFFYLTRARPSWEVTGFFVLHGVCTAVEMVVKKAVSGKVRLRREVSGALTVGFVMVTGGWLFLPQLVRHGVDLKTIDEYPVMFNYTQKKLMGLLGW</sequence>
<accession>Q9XGY6</accession>
<feature type="chain" id="PRO_0000380676" description="Long-chain-alcohol O-fatty-acyltransferase">
    <location>
        <begin position="1"/>
        <end position="352"/>
    </location>
</feature>
<feature type="transmembrane region" description="Helical" evidence="1">
    <location>
        <begin position="13"/>
        <end position="33"/>
    </location>
</feature>
<feature type="transmembrane region" description="Helical" evidence="1">
    <location>
        <begin position="34"/>
        <end position="54"/>
    </location>
</feature>
<feature type="transmembrane region" description="Helical" evidence="1">
    <location>
        <begin position="67"/>
        <end position="87"/>
    </location>
</feature>
<feature type="transmembrane region" description="Helical" evidence="1">
    <location>
        <begin position="128"/>
        <end position="148"/>
    </location>
</feature>
<feature type="transmembrane region" description="Helical" evidence="1">
    <location>
        <begin position="155"/>
        <end position="175"/>
    </location>
</feature>
<feature type="transmembrane region" description="Helical" evidence="1">
    <location>
        <begin position="239"/>
        <end position="259"/>
    </location>
</feature>
<feature type="transmembrane region" description="Helical" evidence="1">
    <location>
        <begin position="267"/>
        <end position="287"/>
    </location>
</feature>
<feature type="transmembrane region" description="Helical" evidence="1">
    <location>
        <begin position="303"/>
        <end position="323"/>
    </location>
</feature>
<evidence type="ECO:0000255" key="1"/>
<evidence type="ECO:0000269" key="2">
    <source>
    </source>
</evidence>
<evidence type="ECO:0000305" key="3"/>
<proteinExistence type="evidence at protein level"/>
<dbReference type="EC" id="2.3.1.75"/>
<dbReference type="EMBL" id="AF149919">
    <property type="protein sequence ID" value="AAD38041.1"/>
    <property type="molecule type" value="mRNA"/>
</dbReference>
<dbReference type="PIR" id="T48903">
    <property type="entry name" value="T48903"/>
</dbReference>
<dbReference type="BioCyc" id="MetaCyc:MONOMER-13890"/>
<dbReference type="BRENDA" id="2.3.1.75">
    <property type="organism ID" value="5733"/>
</dbReference>
<dbReference type="GO" id="GO:0005783">
    <property type="term" value="C:endoplasmic reticulum"/>
    <property type="evidence" value="ECO:0007669"/>
    <property type="project" value="UniProtKB-KW"/>
</dbReference>
<dbReference type="GO" id="GO:0016020">
    <property type="term" value="C:membrane"/>
    <property type="evidence" value="ECO:0007669"/>
    <property type="project" value="UniProtKB-KW"/>
</dbReference>
<dbReference type="GO" id="GO:0047196">
    <property type="term" value="F:long-chain-alcohol O-fatty-acyltransferase activity"/>
    <property type="evidence" value="ECO:0007669"/>
    <property type="project" value="UniProtKB-EC"/>
</dbReference>
<dbReference type="GO" id="GO:0006629">
    <property type="term" value="P:lipid metabolic process"/>
    <property type="evidence" value="ECO:0007669"/>
    <property type="project" value="UniProtKB-KW"/>
</dbReference>
<dbReference type="InterPro" id="IPR044851">
    <property type="entry name" value="Wax_synthase"/>
</dbReference>
<dbReference type="InterPro" id="IPR032805">
    <property type="entry name" value="Wax_synthase_dom"/>
</dbReference>
<dbReference type="InterPro" id="IPR017088">
    <property type="entry name" value="Wax_synthase_Magnoliopsida"/>
</dbReference>
<dbReference type="PANTHER" id="PTHR31595">
    <property type="entry name" value="LONG-CHAIN-ALCOHOL O-FATTY-ACYLTRANSFERASE 3-RELATED"/>
    <property type="match status" value="1"/>
</dbReference>
<dbReference type="PANTHER" id="PTHR31595:SF70">
    <property type="entry name" value="LONG-CHAIN-ALCOHOL O-FATTY-ACYLTRANSFERASE 3-RELATED"/>
    <property type="match status" value="1"/>
</dbReference>
<dbReference type="Pfam" id="PF13813">
    <property type="entry name" value="MBOAT_2"/>
    <property type="match status" value="1"/>
</dbReference>
<dbReference type="PIRSF" id="PIRSF037006">
    <property type="entry name" value="Wax_synthase"/>
    <property type="match status" value="1"/>
</dbReference>
<organism>
    <name type="scientific">Simmondsia chinensis</name>
    <name type="common">Jojoba</name>
    <name type="synonym">Buxus chinensis</name>
    <dbReference type="NCBI Taxonomy" id="3999"/>
    <lineage>
        <taxon>Eukaryota</taxon>
        <taxon>Viridiplantae</taxon>
        <taxon>Streptophyta</taxon>
        <taxon>Embryophyta</taxon>
        <taxon>Tracheophyta</taxon>
        <taxon>Spermatophyta</taxon>
        <taxon>Magnoliopsida</taxon>
        <taxon>eudicotyledons</taxon>
        <taxon>Gunneridae</taxon>
        <taxon>Pentapetalae</taxon>
        <taxon>Caryophyllales</taxon>
        <taxon>Simmondsiaceae</taxon>
        <taxon>Simmondsia</taxon>
    </lineage>
</organism>
<protein>
    <recommendedName>
        <fullName>Long-chain-alcohol O-fatty-acyltransferase</fullName>
        <ecNumber>2.3.1.75</ecNumber>
    </recommendedName>
    <alternativeName>
        <fullName>Wax synthase</fullName>
    </alternativeName>
</protein>
<comment type="function">
    <text evidence="2">Catalyzes the final step in the synthesis of long-chain linear esters (waxes). Has activity with both saturated and monounsaturated acyl-CoA ranging from 14 to 24 carbons in length, but C20:1 acyl-CoA is the preferred substrate.</text>
</comment>
<comment type="catalytic activity">
    <reaction evidence="2">
        <text>a long chain fatty alcohol + a fatty acyl-CoA = a wax ester + CoA</text>
        <dbReference type="Rhea" id="RHEA:38443"/>
        <dbReference type="ChEBI" id="CHEBI:10036"/>
        <dbReference type="ChEBI" id="CHEBI:17135"/>
        <dbReference type="ChEBI" id="CHEBI:57287"/>
        <dbReference type="ChEBI" id="CHEBI:77636"/>
        <dbReference type="EC" id="2.3.1.75"/>
    </reaction>
</comment>
<comment type="subcellular location">
    <subcellularLocation>
        <location evidence="2">Microsome membrane</location>
        <topology evidence="2">Multi-pass membrane protein</topology>
    </subcellularLocation>
</comment>
<comment type="similarity">
    <text evidence="3">Belongs to the wax synthase family.</text>
</comment>
<name>WAXS1_SIMCH</name>
<reference key="1">
    <citation type="journal article" date="2000" name="Plant Physiol.">
        <title>Purification of a jojoba embryo wax synthase, cloning of its cDNA, and production of high levels of wax in seeds of transgenic arabidopsis.</title>
        <authorList>
            <person name="Lardizabal K.D."/>
            <person name="Metz J.G."/>
            <person name="Sakamoto T."/>
            <person name="Hutton W.C."/>
            <person name="Pollard M.R."/>
            <person name="Lassner M.W."/>
        </authorList>
    </citation>
    <scope>NUCLEOTIDE SEQUENCE [MRNA]</scope>
    <scope>FUNCTION</scope>
    <scope>CATALYTIC ACTIVITY</scope>
    <scope>SUBCELLULAR LOCATION</scope>
</reference>
<keyword id="KW-0012">Acyltransferase</keyword>
<keyword id="KW-0256">Endoplasmic reticulum</keyword>
<keyword id="KW-0444">Lipid biosynthesis</keyword>
<keyword id="KW-0443">Lipid metabolism</keyword>
<keyword id="KW-0472">Membrane</keyword>
<keyword id="KW-0492">Microsome</keyword>
<keyword id="KW-0808">Transferase</keyword>
<keyword id="KW-0812">Transmembrane</keyword>
<keyword id="KW-1133">Transmembrane helix</keyword>